<sequence>MPHFCLVASTSMLSASYDVSQDLSSALYTSSSTYKYESASARIDCLSTTCTQVLKTLEIEHKLSMKVFATLFLLAASATAALAAVPAPNAGCSQPGQYCNGGTFLCCNNRQCNNNVRVPYSVPGYARNPSYAFSRHHGRNGSSQLSMSIWDALEELLVSGGDWVSYNQWAKYEAGARVVGTIHERRGMNEID</sequence>
<reference key="1">
    <citation type="journal article" date="2005" name="Nature">
        <title>Genomic sequence of the pathogenic and allergenic filamentous fungus Aspergillus fumigatus.</title>
        <authorList>
            <person name="Nierman W.C."/>
            <person name="Pain A."/>
            <person name="Anderson M.J."/>
            <person name="Wortman J.R."/>
            <person name="Kim H.S."/>
            <person name="Arroyo J."/>
            <person name="Berriman M."/>
            <person name="Abe K."/>
            <person name="Archer D.B."/>
            <person name="Bermejo C."/>
            <person name="Bennett J.W."/>
            <person name="Bowyer P."/>
            <person name="Chen D."/>
            <person name="Collins M."/>
            <person name="Coulsen R."/>
            <person name="Davies R."/>
            <person name="Dyer P.S."/>
            <person name="Farman M.L."/>
            <person name="Fedorova N."/>
            <person name="Fedorova N.D."/>
            <person name="Feldblyum T.V."/>
            <person name="Fischer R."/>
            <person name="Fosker N."/>
            <person name="Fraser A."/>
            <person name="Garcia J.L."/>
            <person name="Garcia M.J."/>
            <person name="Goble A."/>
            <person name="Goldman G.H."/>
            <person name="Gomi K."/>
            <person name="Griffith-Jones S."/>
            <person name="Gwilliam R."/>
            <person name="Haas B.J."/>
            <person name="Haas H."/>
            <person name="Harris D.E."/>
            <person name="Horiuchi H."/>
            <person name="Huang J."/>
            <person name="Humphray S."/>
            <person name="Jimenez J."/>
            <person name="Keller N."/>
            <person name="Khouri H."/>
            <person name="Kitamoto K."/>
            <person name="Kobayashi T."/>
            <person name="Konzack S."/>
            <person name="Kulkarni R."/>
            <person name="Kumagai T."/>
            <person name="Lafton A."/>
            <person name="Latge J.-P."/>
            <person name="Li W."/>
            <person name="Lord A."/>
            <person name="Lu C."/>
            <person name="Majoros W.H."/>
            <person name="May G.S."/>
            <person name="Miller B.L."/>
            <person name="Mohamoud Y."/>
            <person name="Molina M."/>
            <person name="Monod M."/>
            <person name="Mouyna I."/>
            <person name="Mulligan S."/>
            <person name="Murphy L.D."/>
            <person name="O'Neil S."/>
            <person name="Paulsen I."/>
            <person name="Penalva M.A."/>
            <person name="Pertea M."/>
            <person name="Price C."/>
            <person name="Pritchard B.L."/>
            <person name="Quail M.A."/>
            <person name="Rabbinowitsch E."/>
            <person name="Rawlins N."/>
            <person name="Rajandream M.A."/>
            <person name="Reichard U."/>
            <person name="Renauld H."/>
            <person name="Robson G.D."/>
            <person name="Rodriguez de Cordoba S."/>
            <person name="Rodriguez-Pena J.M."/>
            <person name="Ronning C.M."/>
            <person name="Rutter S."/>
            <person name="Salzberg S.L."/>
            <person name="Sanchez M."/>
            <person name="Sanchez-Ferrero J.C."/>
            <person name="Saunders D."/>
            <person name="Seeger K."/>
            <person name="Squares R."/>
            <person name="Squares S."/>
            <person name="Takeuchi M."/>
            <person name="Tekaia F."/>
            <person name="Turner G."/>
            <person name="Vazquez de Aldana C.R."/>
            <person name="Weidman J."/>
            <person name="White O."/>
            <person name="Woodward J.R."/>
            <person name="Yu J.-H."/>
            <person name="Fraser C.M."/>
            <person name="Galagan J.E."/>
            <person name="Asai K."/>
            <person name="Machida M."/>
            <person name="Hall N."/>
            <person name="Barrell B.G."/>
            <person name="Denning D.W."/>
        </authorList>
    </citation>
    <scope>NUCLEOTIDE SEQUENCE [LARGE SCALE GENOMIC DNA]</scope>
    <source>
        <strain>ATCC MYA-4609 / CBS 101355 / FGSC A1100 / Af293</strain>
    </source>
</reference>
<reference key="2">
    <citation type="journal article" date="2017" name="J. Fungi">
        <title>Role of Hydrophobins in Aspergillus fumigatus.</title>
        <authorList>
            <person name="Valsecchi I."/>
            <person name="Dupres V."/>
            <person name="Stephen-Victor E."/>
            <person name="Guijarro J.I."/>
            <person name="Gibbons J."/>
            <person name="Beau R."/>
            <person name="Bayry J."/>
            <person name="Coppee J.Y."/>
            <person name="Lafont F."/>
            <person name="Latge J.P."/>
            <person name="Beauvais A."/>
        </authorList>
    </citation>
    <scope>FUNCTION</scope>
    <scope>DOMAIN</scope>
    <scope>INDUCTION</scope>
</reference>
<evidence type="ECO:0000250" key="1">
    <source>
        <dbReference type="UniProtKB" id="Q04571"/>
    </source>
</evidence>
<evidence type="ECO:0000269" key="2">
    <source>
    </source>
</evidence>
<evidence type="ECO:0000303" key="3">
    <source>
    </source>
</evidence>
<evidence type="ECO:0000305" key="4"/>
<keyword id="KW-1015">Disulfide bond</keyword>
<keyword id="KW-1185">Reference proteome</keyword>
<protein>
    <recommendedName>
        <fullName evidence="3">Hydrophobin-like protein rodD</fullName>
    </recommendedName>
    <alternativeName>
        <fullName evidence="3">Rodlet protein D</fullName>
    </alternativeName>
</protein>
<name>RODD_ASPFU</name>
<dbReference type="EMBL" id="AAHF01000011">
    <property type="protein sequence ID" value="EAL86155.1"/>
    <property type="molecule type" value="Genomic_DNA"/>
</dbReference>
<dbReference type="RefSeq" id="XP_748193.1">
    <property type="nucleotide sequence ID" value="XM_743100.1"/>
</dbReference>
<dbReference type="STRING" id="330879.Q4WE22"/>
<dbReference type="EnsemblFungi" id="EAL86155">
    <property type="protein sequence ID" value="EAL86155"/>
    <property type="gene ID" value="AFUA_5G01490"/>
</dbReference>
<dbReference type="GeneID" id="3505415"/>
<dbReference type="KEGG" id="afm:AFUA_5G01490"/>
<dbReference type="VEuPathDB" id="FungiDB:Afu5g01490"/>
<dbReference type="eggNOG" id="ENOG502RQ1H">
    <property type="taxonomic scope" value="Eukaryota"/>
</dbReference>
<dbReference type="HOGENOM" id="CLU_1414864_0_0_1"/>
<dbReference type="InParanoid" id="Q4WE22"/>
<dbReference type="OrthoDB" id="4509810at2759"/>
<dbReference type="Proteomes" id="UP000002530">
    <property type="component" value="Chromosome 5"/>
</dbReference>
<accession>Q4WE22</accession>
<gene>
    <name evidence="3" type="primary">rodD</name>
    <name type="ORF">AFUA_5G01490</name>
</gene>
<proteinExistence type="evidence at transcript level"/>
<comment type="function">
    <text evidence="2 4">Aerial growth, conidiation, and dispersal of filamentous fungi in the environment rely upon a capability of their secreting small amphipathic proteins called hydrophobins (HPBs) with low sequence identity. Class I can self-assemble into an outermost layer of rodlet bundles on aerial cell surfaces, conferring cellular hydrophobicity that supports fungal growth, development and dispersal; whereas Class II form highly ordered films at water-air interfaces through intermolecular interactions but contribute nothing to the rodlet structure (Probable). RodD is a an hydrophobin-like protein that, unlike rodA, is not required for rodlet formation (PubMed:29371496).</text>
</comment>
<comment type="subunit">
    <text evidence="1">Self-assembles to form functional amyloid fibrils called rodlets. Self-assembly into fibrillar rodlets occurs spontaneously at hydrophobic:hydrophilic interfaces and the rodlets further associate laterally to form amphipathic monolayers.</text>
</comment>
<comment type="induction">
    <text evidence="2">Eexpression is low in biofilm, but high in sporulating cultures.</text>
</comment>
<comment type="domain">
    <text evidence="2">Does not have a secretion signal, has an extremely short C3-C4 loop and a very long C-terminal tail (132 residues) after cysteine C8, has an atypical hydrophobicity profile showing a highly hydrophilic C7-C8 region in contrast with class I and class II hydrophobins. Moreover, most importantly, it lacks one cysteine (Cys3 or Cys4, based on the position) of the first of the two CC doublets that define hydrophobins.</text>
</comment>
<comment type="similarity">
    <text evidence="4">Belongs to the fungal hydrophobin family.</text>
</comment>
<organism>
    <name type="scientific">Aspergillus fumigatus (strain ATCC MYA-4609 / CBS 101355 / FGSC A1100 / Af293)</name>
    <name type="common">Neosartorya fumigata</name>
    <dbReference type="NCBI Taxonomy" id="330879"/>
    <lineage>
        <taxon>Eukaryota</taxon>
        <taxon>Fungi</taxon>
        <taxon>Dikarya</taxon>
        <taxon>Ascomycota</taxon>
        <taxon>Pezizomycotina</taxon>
        <taxon>Eurotiomycetes</taxon>
        <taxon>Eurotiomycetidae</taxon>
        <taxon>Eurotiales</taxon>
        <taxon>Aspergillaceae</taxon>
        <taxon>Aspergillus</taxon>
        <taxon>Aspergillus subgen. Fumigati</taxon>
    </lineage>
</organism>
<feature type="chain" id="PRO_0000462326" description="Hydrophobin-like protein rodD">
    <location>
        <begin position="1"/>
        <end position="192"/>
    </location>
</feature>
<feature type="disulfide bond" evidence="1">
    <location>
        <begin position="45"/>
        <end position="106"/>
    </location>
</feature>
<feature type="disulfide bond" evidence="1">
    <location>
        <begin position="50"/>
        <end position="99"/>
    </location>
</feature>
<feature type="disulfide bond" evidence="1">
    <location>
        <begin position="107"/>
        <end position="112"/>
    </location>
</feature>